<sequence length="452" mass="49522">MAAATLLRATPRFSGLCASPTPFLQGRLRPLKAPASPFLCRGLAVEAKKTYVRDKPHVNVGTIGHVDHGKTTLTAAITKILAEGGGAKFKKYEEIDNAPEERARGITINAAHVEYSTAARHYAHTDCPGHADYVKNMITGTAPLDGCILVVAANDGPMPQTREHLLLAKQIGVEHVVVYVNKADAVQDSEMVELVELEIRELLTEFGYKGEETPVIVGSALCALEQRDPELGVKSVQKLLDAVDTYIPVPTRDLEKPFLLPVESVYSIPGRGTVVTGTLERGILKKGDECELLGHNKNIRTVVTGIEMFHKSLERAEAGDNLGALVRGLKREDLRRGLVMVKPGSIQPHQKVEAQVYILSKEEGGRHKPFVSHFMPVMFSLTWDMACRVILPPGKELAMPGEDLKLSLILRQPMILEKGQRFTLRDGNKTIGTGLVTDVPAMTEEDKNIKWS</sequence>
<reference evidence="6" key="1">
    <citation type="journal article" date="2004" name="Nature">
        <title>Genome sequence of the Brown Norway rat yields insights into mammalian evolution.</title>
        <authorList>
            <person name="Gibbs R.A."/>
            <person name="Weinstock G.M."/>
            <person name="Metzker M.L."/>
            <person name="Muzny D.M."/>
            <person name="Sodergren E.J."/>
            <person name="Scherer S."/>
            <person name="Scott G."/>
            <person name="Steffen D."/>
            <person name="Worley K.C."/>
            <person name="Burch P.E."/>
            <person name="Okwuonu G."/>
            <person name="Hines S."/>
            <person name="Lewis L."/>
            <person name="Deramo C."/>
            <person name="Delgado O."/>
            <person name="Dugan-Rocha S."/>
            <person name="Miner G."/>
            <person name="Morgan M."/>
            <person name="Hawes A."/>
            <person name="Gill R."/>
            <person name="Holt R.A."/>
            <person name="Adams M.D."/>
            <person name="Amanatides P.G."/>
            <person name="Baden-Tillson H."/>
            <person name="Barnstead M."/>
            <person name="Chin S."/>
            <person name="Evans C.A."/>
            <person name="Ferriera S."/>
            <person name="Fosler C."/>
            <person name="Glodek A."/>
            <person name="Gu Z."/>
            <person name="Jennings D."/>
            <person name="Kraft C.L."/>
            <person name="Nguyen T."/>
            <person name="Pfannkoch C.M."/>
            <person name="Sitter C."/>
            <person name="Sutton G.G."/>
            <person name="Venter J.C."/>
            <person name="Woodage T."/>
            <person name="Smith D."/>
            <person name="Lee H.-M."/>
            <person name="Gustafson E."/>
            <person name="Cahill P."/>
            <person name="Kana A."/>
            <person name="Doucette-Stamm L."/>
            <person name="Weinstock K."/>
            <person name="Fechtel K."/>
            <person name="Weiss R.B."/>
            <person name="Dunn D.M."/>
            <person name="Green E.D."/>
            <person name="Blakesley R.W."/>
            <person name="Bouffard G.G."/>
            <person name="De Jong P.J."/>
            <person name="Osoegawa K."/>
            <person name="Zhu B."/>
            <person name="Marra M."/>
            <person name="Schein J."/>
            <person name="Bosdet I."/>
            <person name="Fjell C."/>
            <person name="Jones S."/>
            <person name="Krzywinski M."/>
            <person name="Mathewson C."/>
            <person name="Siddiqui A."/>
            <person name="Wye N."/>
            <person name="McPherson J."/>
            <person name="Zhao S."/>
            <person name="Fraser C.M."/>
            <person name="Shetty J."/>
            <person name="Shatsman S."/>
            <person name="Geer K."/>
            <person name="Chen Y."/>
            <person name="Abramzon S."/>
            <person name="Nierman W.C."/>
            <person name="Havlak P.H."/>
            <person name="Chen R."/>
            <person name="Durbin K.J."/>
            <person name="Egan A."/>
            <person name="Ren Y."/>
            <person name="Song X.-Z."/>
            <person name="Li B."/>
            <person name="Liu Y."/>
            <person name="Qin X."/>
            <person name="Cawley S."/>
            <person name="Cooney A.J."/>
            <person name="D'Souza L.M."/>
            <person name="Martin K."/>
            <person name="Wu J.Q."/>
            <person name="Gonzalez-Garay M.L."/>
            <person name="Jackson A.R."/>
            <person name="Kalafus K.J."/>
            <person name="McLeod M.P."/>
            <person name="Milosavljevic A."/>
            <person name="Virk D."/>
            <person name="Volkov A."/>
            <person name="Wheeler D.A."/>
            <person name="Zhang Z."/>
            <person name="Bailey J.A."/>
            <person name="Eichler E.E."/>
            <person name="Tuzun E."/>
            <person name="Birney E."/>
            <person name="Mongin E."/>
            <person name="Ureta-Vidal A."/>
            <person name="Woodwark C."/>
            <person name="Zdobnov E."/>
            <person name="Bork P."/>
            <person name="Suyama M."/>
            <person name="Torrents D."/>
            <person name="Alexandersson M."/>
            <person name="Trask B.J."/>
            <person name="Young J.M."/>
            <person name="Huang H."/>
            <person name="Wang H."/>
            <person name="Xing H."/>
            <person name="Daniels S."/>
            <person name="Gietzen D."/>
            <person name="Schmidt J."/>
            <person name="Stevens K."/>
            <person name="Vitt U."/>
            <person name="Wingrove J."/>
            <person name="Camara F."/>
            <person name="Mar Alba M."/>
            <person name="Abril J.F."/>
            <person name="Guigo R."/>
            <person name="Smit A."/>
            <person name="Dubchak I."/>
            <person name="Rubin E.M."/>
            <person name="Couronne O."/>
            <person name="Poliakov A."/>
            <person name="Huebner N."/>
            <person name="Ganten D."/>
            <person name="Goesele C."/>
            <person name="Hummel O."/>
            <person name="Kreitler T."/>
            <person name="Lee Y.-A."/>
            <person name="Monti J."/>
            <person name="Schulz H."/>
            <person name="Zimdahl H."/>
            <person name="Himmelbauer H."/>
            <person name="Lehrach H."/>
            <person name="Jacob H.J."/>
            <person name="Bromberg S."/>
            <person name="Gullings-Handley J."/>
            <person name="Jensen-Seaman M.I."/>
            <person name="Kwitek A.E."/>
            <person name="Lazar J."/>
            <person name="Pasko D."/>
            <person name="Tonellato P.J."/>
            <person name="Twigger S."/>
            <person name="Ponting C.P."/>
            <person name="Duarte J.M."/>
            <person name="Rice S."/>
            <person name="Goodstadt L."/>
            <person name="Beatson S.A."/>
            <person name="Emes R.D."/>
            <person name="Winter E.E."/>
            <person name="Webber C."/>
            <person name="Brandt P."/>
            <person name="Nyakatura G."/>
            <person name="Adetobi M."/>
            <person name="Chiaromonte F."/>
            <person name="Elnitski L."/>
            <person name="Eswara P."/>
            <person name="Hardison R.C."/>
            <person name="Hou M."/>
            <person name="Kolbe D."/>
            <person name="Makova K."/>
            <person name="Miller W."/>
            <person name="Nekrutenko A."/>
            <person name="Riemer C."/>
            <person name="Schwartz S."/>
            <person name="Taylor J."/>
            <person name="Yang S."/>
            <person name="Zhang Y."/>
            <person name="Lindpaintner K."/>
            <person name="Andrews T.D."/>
            <person name="Caccamo M."/>
            <person name="Clamp M."/>
            <person name="Clarke L."/>
            <person name="Curwen V."/>
            <person name="Durbin R.M."/>
            <person name="Eyras E."/>
            <person name="Searle S.M."/>
            <person name="Cooper G.M."/>
            <person name="Batzoglou S."/>
            <person name="Brudno M."/>
            <person name="Sidow A."/>
            <person name="Stone E.A."/>
            <person name="Payseur B.A."/>
            <person name="Bourque G."/>
            <person name="Lopez-Otin C."/>
            <person name="Puente X.S."/>
            <person name="Chakrabarti K."/>
            <person name="Chatterji S."/>
            <person name="Dewey C."/>
            <person name="Pachter L."/>
            <person name="Bray N."/>
            <person name="Yap V.B."/>
            <person name="Caspi A."/>
            <person name="Tesler G."/>
            <person name="Pevzner P.A."/>
            <person name="Haussler D."/>
            <person name="Roskin K.M."/>
            <person name="Baertsch R."/>
            <person name="Clawson H."/>
            <person name="Furey T.S."/>
            <person name="Hinrichs A.S."/>
            <person name="Karolchik D."/>
            <person name="Kent W.J."/>
            <person name="Rosenbloom K.R."/>
            <person name="Trumbower H."/>
            <person name="Weirauch M."/>
            <person name="Cooper D.N."/>
            <person name="Stenson P.D."/>
            <person name="Ma B."/>
            <person name="Brent M."/>
            <person name="Arumugam M."/>
            <person name="Shteynberg D."/>
            <person name="Copley R.R."/>
            <person name="Taylor M.S."/>
            <person name="Riethman H."/>
            <person name="Mudunuri U."/>
            <person name="Peterson J."/>
            <person name="Guyer M."/>
            <person name="Felsenfeld A."/>
            <person name="Old S."/>
            <person name="Mockrin S."/>
            <person name="Collins F.S."/>
        </authorList>
    </citation>
    <scope>NUCLEOTIDE SEQUENCE [LARGE SCALE GENOMIC DNA]</scope>
    <source>
        <strain evidence="5">Brown Norway</strain>
    </source>
</reference>
<reference key="2">
    <citation type="journal article" date="2009" name="Proteomics">
        <title>Proteome profile of the mature rat olfactory bulb.</title>
        <authorList>
            <person name="Maurya D.K."/>
            <person name="Sundaram C.S."/>
            <person name="Bhargava P."/>
        </authorList>
    </citation>
    <scope>IDENTIFICATION BY MASS SPECTROMETRY</scope>
    <scope>SUBCELLULAR LOCATION</scope>
</reference>
<evidence type="ECO:0000250" key="1">
    <source>
        <dbReference type="UniProtKB" id="P0CE47"/>
    </source>
</evidence>
<evidence type="ECO:0000250" key="2">
    <source>
        <dbReference type="UniProtKB" id="P49411"/>
    </source>
</evidence>
<evidence type="ECO:0000250" key="3">
    <source>
        <dbReference type="UniProtKB" id="Q8BFR5"/>
    </source>
</evidence>
<evidence type="ECO:0000255" key="4">
    <source>
        <dbReference type="PROSITE-ProRule" id="PRU01059"/>
    </source>
</evidence>
<evidence type="ECO:0000269" key="5">
    <source>
    </source>
</evidence>
<evidence type="ECO:0000305" key="6"/>
<organism>
    <name type="scientific">Rattus norvegicus</name>
    <name type="common">Rat</name>
    <dbReference type="NCBI Taxonomy" id="10116"/>
    <lineage>
        <taxon>Eukaryota</taxon>
        <taxon>Metazoa</taxon>
        <taxon>Chordata</taxon>
        <taxon>Craniata</taxon>
        <taxon>Vertebrata</taxon>
        <taxon>Euteleostomi</taxon>
        <taxon>Mammalia</taxon>
        <taxon>Eutheria</taxon>
        <taxon>Euarchontoglires</taxon>
        <taxon>Glires</taxon>
        <taxon>Rodentia</taxon>
        <taxon>Myomorpha</taxon>
        <taxon>Muroidea</taxon>
        <taxon>Muridae</taxon>
        <taxon>Murinae</taxon>
        <taxon>Rattus</taxon>
    </lineage>
</organism>
<protein>
    <recommendedName>
        <fullName>Elongation factor Tu, mitochondrial</fullName>
        <ecNumber evidence="1">3.6.5.3</ecNumber>
    </recommendedName>
</protein>
<gene>
    <name evidence="2" type="primary">Tufm</name>
</gene>
<dbReference type="EC" id="3.6.5.3" evidence="1"/>
<dbReference type="EMBL" id="AABR03000083">
    <property type="status" value="NOT_ANNOTATED_CDS"/>
    <property type="molecule type" value="Genomic_DNA"/>
</dbReference>
<dbReference type="RefSeq" id="NP_001099765.1">
    <property type="nucleotide sequence ID" value="NM_001106295.1"/>
</dbReference>
<dbReference type="SMR" id="P85834"/>
<dbReference type="BioGRID" id="254286">
    <property type="interactions" value="8"/>
</dbReference>
<dbReference type="FunCoup" id="P85834">
    <property type="interactions" value="2320"/>
</dbReference>
<dbReference type="IntAct" id="P85834">
    <property type="interactions" value="6"/>
</dbReference>
<dbReference type="MINT" id="P85834"/>
<dbReference type="STRING" id="10116.ENSRNOP00000025203"/>
<dbReference type="GlyGen" id="P85834">
    <property type="glycosylation" value="1 site, 1 O-linked glycan (1 site)"/>
</dbReference>
<dbReference type="iPTMnet" id="P85834"/>
<dbReference type="PhosphoSitePlus" id="P85834"/>
<dbReference type="jPOST" id="P85834"/>
<dbReference type="PaxDb" id="10116-ENSRNOP00000025203"/>
<dbReference type="Ensembl" id="ENSRNOT00000025203.7">
    <property type="protein sequence ID" value="ENSRNOP00000025203.6"/>
    <property type="gene ID" value="ENSRNOG00000018604.7"/>
</dbReference>
<dbReference type="GeneID" id="293481"/>
<dbReference type="KEGG" id="rno:293481"/>
<dbReference type="UCSC" id="RGD:1305501">
    <property type="organism name" value="rat"/>
</dbReference>
<dbReference type="AGR" id="RGD:1305501"/>
<dbReference type="CTD" id="7284"/>
<dbReference type="RGD" id="1305501">
    <property type="gene designation" value="Tufm"/>
</dbReference>
<dbReference type="eggNOG" id="KOG0460">
    <property type="taxonomic scope" value="Eukaryota"/>
</dbReference>
<dbReference type="GeneTree" id="ENSGT00940000156748"/>
<dbReference type="HOGENOM" id="CLU_007265_0_0_1"/>
<dbReference type="InParanoid" id="P85834"/>
<dbReference type="OMA" id="EGDKEWG"/>
<dbReference type="OrthoDB" id="2067at2759"/>
<dbReference type="PhylomeDB" id="P85834"/>
<dbReference type="PRO" id="PR:P85834"/>
<dbReference type="Proteomes" id="UP000002494">
    <property type="component" value="Chromosome 1"/>
</dbReference>
<dbReference type="Bgee" id="ENSRNOG00000018604">
    <property type="expression patterns" value="Expressed in heart and 20 other cell types or tissues"/>
</dbReference>
<dbReference type="GO" id="GO:0042645">
    <property type="term" value="C:mitochondrial nucleoid"/>
    <property type="evidence" value="ECO:0000266"/>
    <property type="project" value="RGD"/>
</dbReference>
<dbReference type="GO" id="GO:0005739">
    <property type="term" value="C:mitochondrion"/>
    <property type="evidence" value="ECO:0000318"/>
    <property type="project" value="GO_Central"/>
</dbReference>
<dbReference type="GO" id="GO:0045202">
    <property type="term" value="C:synapse"/>
    <property type="evidence" value="ECO:0000314"/>
    <property type="project" value="SynGO"/>
</dbReference>
<dbReference type="GO" id="GO:0005525">
    <property type="term" value="F:GTP binding"/>
    <property type="evidence" value="ECO:0000250"/>
    <property type="project" value="UniProtKB"/>
</dbReference>
<dbReference type="GO" id="GO:0003924">
    <property type="term" value="F:GTPase activity"/>
    <property type="evidence" value="ECO:0000250"/>
    <property type="project" value="UniProtKB"/>
</dbReference>
<dbReference type="GO" id="GO:0000287">
    <property type="term" value="F:magnesium ion binding"/>
    <property type="evidence" value="ECO:0000250"/>
    <property type="project" value="UniProtKB"/>
</dbReference>
<dbReference type="GO" id="GO:0003746">
    <property type="term" value="F:translation elongation factor activity"/>
    <property type="evidence" value="ECO:0000266"/>
    <property type="project" value="RGD"/>
</dbReference>
<dbReference type="GO" id="GO:0070125">
    <property type="term" value="P:mitochondrial translational elongation"/>
    <property type="evidence" value="ECO:0000318"/>
    <property type="project" value="GO_Central"/>
</dbReference>
<dbReference type="GO" id="GO:0045471">
    <property type="term" value="P:response to ethanol"/>
    <property type="evidence" value="ECO:0000270"/>
    <property type="project" value="RGD"/>
</dbReference>
<dbReference type="GO" id="GO:0006414">
    <property type="term" value="P:translational elongation"/>
    <property type="evidence" value="ECO:0000266"/>
    <property type="project" value="RGD"/>
</dbReference>
<dbReference type="CDD" id="cd01884">
    <property type="entry name" value="EF_Tu"/>
    <property type="match status" value="1"/>
</dbReference>
<dbReference type="CDD" id="cd03697">
    <property type="entry name" value="EFTU_II"/>
    <property type="match status" value="1"/>
</dbReference>
<dbReference type="CDD" id="cd03706">
    <property type="entry name" value="mtEFTU_III"/>
    <property type="match status" value="1"/>
</dbReference>
<dbReference type="FunFam" id="2.40.30.10:FF:000068">
    <property type="entry name" value="Elongation factor Tu"/>
    <property type="match status" value="1"/>
</dbReference>
<dbReference type="FunFam" id="2.40.30.10:FF:000071">
    <property type="entry name" value="Elongation factor Tu"/>
    <property type="match status" value="1"/>
</dbReference>
<dbReference type="FunFam" id="3.40.50.300:FF:000003">
    <property type="entry name" value="Elongation factor Tu"/>
    <property type="match status" value="1"/>
</dbReference>
<dbReference type="Gene3D" id="3.40.50.300">
    <property type="entry name" value="P-loop containing nucleotide triphosphate hydrolases"/>
    <property type="match status" value="1"/>
</dbReference>
<dbReference type="Gene3D" id="2.40.30.10">
    <property type="entry name" value="Translation factors"/>
    <property type="match status" value="2"/>
</dbReference>
<dbReference type="InterPro" id="IPR041709">
    <property type="entry name" value="EF-Tu_GTP-bd"/>
</dbReference>
<dbReference type="InterPro" id="IPR050055">
    <property type="entry name" value="EF-Tu_GTPase"/>
</dbReference>
<dbReference type="InterPro" id="IPR004161">
    <property type="entry name" value="EFTu-like_2"/>
</dbReference>
<dbReference type="InterPro" id="IPR033720">
    <property type="entry name" value="EFTU_2"/>
</dbReference>
<dbReference type="InterPro" id="IPR031157">
    <property type="entry name" value="G_TR_CS"/>
</dbReference>
<dbReference type="InterPro" id="IPR027417">
    <property type="entry name" value="P-loop_NTPase"/>
</dbReference>
<dbReference type="InterPro" id="IPR000795">
    <property type="entry name" value="T_Tr_GTP-bd_dom"/>
</dbReference>
<dbReference type="InterPro" id="IPR009000">
    <property type="entry name" value="Transl_B-barrel_sf"/>
</dbReference>
<dbReference type="InterPro" id="IPR009001">
    <property type="entry name" value="Transl_elong_EF1A/Init_IF2_C"/>
</dbReference>
<dbReference type="InterPro" id="IPR004541">
    <property type="entry name" value="Transl_elong_EFTu/EF1A_bac/org"/>
</dbReference>
<dbReference type="InterPro" id="IPR004160">
    <property type="entry name" value="Transl_elong_EFTu/EF1A_C"/>
</dbReference>
<dbReference type="NCBIfam" id="TIGR00485">
    <property type="entry name" value="EF-Tu"/>
    <property type="match status" value="1"/>
</dbReference>
<dbReference type="NCBIfam" id="NF000766">
    <property type="entry name" value="PRK00049.1"/>
    <property type="match status" value="1"/>
</dbReference>
<dbReference type="NCBIfam" id="NF009372">
    <property type="entry name" value="PRK12735.1"/>
    <property type="match status" value="1"/>
</dbReference>
<dbReference type="NCBIfam" id="NF009373">
    <property type="entry name" value="PRK12736.1"/>
    <property type="match status" value="1"/>
</dbReference>
<dbReference type="PANTHER" id="PTHR43721:SF36">
    <property type="entry name" value="ELONGATION FACTOR TU, MITOCHONDRIAL"/>
    <property type="match status" value="1"/>
</dbReference>
<dbReference type="PANTHER" id="PTHR43721">
    <property type="entry name" value="ELONGATION FACTOR TU-RELATED"/>
    <property type="match status" value="1"/>
</dbReference>
<dbReference type="Pfam" id="PF00009">
    <property type="entry name" value="GTP_EFTU"/>
    <property type="match status" value="1"/>
</dbReference>
<dbReference type="Pfam" id="PF03144">
    <property type="entry name" value="GTP_EFTU_D2"/>
    <property type="match status" value="1"/>
</dbReference>
<dbReference type="Pfam" id="PF03143">
    <property type="entry name" value="GTP_EFTU_D3"/>
    <property type="match status" value="1"/>
</dbReference>
<dbReference type="PRINTS" id="PR00315">
    <property type="entry name" value="ELONGATNFCT"/>
</dbReference>
<dbReference type="SUPFAM" id="SSF50465">
    <property type="entry name" value="EF-Tu/eEF-1alpha/eIF2-gamma C-terminal domain"/>
    <property type="match status" value="1"/>
</dbReference>
<dbReference type="SUPFAM" id="SSF52540">
    <property type="entry name" value="P-loop containing nucleoside triphosphate hydrolases"/>
    <property type="match status" value="1"/>
</dbReference>
<dbReference type="SUPFAM" id="SSF50447">
    <property type="entry name" value="Translation proteins"/>
    <property type="match status" value="1"/>
</dbReference>
<dbReference type="PROSITE" id="PS00301">
    <property type="entry name" value="G_TR_1"/>
    <property type="match status" value="1"/>
</dbReference>
<dbReference type="PROSITE" id="PS51722">
    <property type="entry name" value="G_TR_2"/>
    <property type="match status" value="1"/>
</dbReference>
<accession>P85834</accession>
<keyword id="KW-0007">Acetylation</keyword>
<keyword id="KW-0251">Elongation factor</keyword>
<keyword id="KW-0342">GTP-binding</keyword>
<keyword id="KW-0378">Hydrolase</keyword>
<keyword id="KW-0460">Magnesium</keyword>
<keyword id="KW-0479">Metal-binding</keyword>
<keyword id="KW-0496">Mitochondrion</keyword>
<keyword id="KW-0547">Nucleotide-binding</keyword>
<keyword id="KW-0597">Phosphoprotein</keyword>
<keyword id="KW-0648">Protein biosynthesis</keyword>
<keyword id="KW-1185">Reference proteome</keyword>
<keyword id="KW-0809">Transit peptide</keyword>
<comment type="function">
    <text evidence="2">GTP hydrolase that promotes the GTP-dependent binding of aminoacyl-tRNA to the A-site of ribosomes during protein biosynthesis. Plays a role in the regulation of autophagy and innate immunity. Recruits ATG5-ATG12 and NLRX1 at mitochondria and serves as a checkpoint of the RIGI-MAVS pathway. In turn, inhibits RLR-mediated type I interferon while promoting autophagy.</text>
</comment>
<comment type="catalytic activity">
    <reaction evidence="1">
        <text>GTP + H2O = GDP + phosphate + H(+)</text>
        <dbReference type="Rhea" id="RHEA:19669"/>
        <dbReference type="ChEBI" id="CHEBI:15377"/>
        <dbReference type="ChEBI" id="CHEBI:15378"/>
        <dbReference type="ChEBI" id="CHEBI:37565"/>
        <dbReference type="ChEBI" id="CHEBI:43474"/>
        <dbReference type="ChEBI" id="CHEBI:58189"/>
        <dbReference type="EC" id="3.6.5.3"/>
    </reaction>
    <physiologicalReaction direction="left-to-right" evidence="1">
        <dbReference type="Rhea" id="RHEA:19670"/>
    </physiologicalReaction>
</comment>
<comment type="subunit">
    <text evidence="2">Interacts with NLRX1. Interacts with ATG16L1.</text>
</comment>
<comment type="subcellular location">
    <subcellularLocation>
        <location evidence="2">Mitochondrion</location>
    </subcellularLocation>
</comment>
<comment type="similarity">
    <text evidence="4">Belongs to the TRAFAC class translation factor GTPase superfamily. Classic translation factor GTPase family. EF-Tu/EF-1A subfamily.</text>
</comment>
<name>EFTU_RAT</name>
<proteinExistence type="evidence at protein level"/>
<feature type="transit peptide" description="Mitochondrion" evidence="2">
    <location>
        <begin position="1"/>
        <end position="43"/>
    </location>
</feature>
<feature type="chain" id="PRO_0000339242" description="Elongation factor Tu, mitochondrial">
    <location>
        <begin position="44"/>
        <end position="452"/>
    </location>
</feature>
<feature type="domain" description="tr-type G" evidence="4">
    <location>
        <begin position="55"/>
        <end position="251"/>
    </location>
</feature>
<feature type="region of interest" description="G1" evidence="4">
    <location>
        <begin position="64"/>
        <end position="71"/>
    </location>
</feature>
<feature type="region of interest" description="G2" evidence="4">
    <location>
        <begin position="105"/>
        <end position="109"/>
    </location>
</feature>
<feature type="region of interest" description="G3" evidence="4">
    <location>
        <begin position="126"/>
        <end position="129"/>
    </location>
</feature>
<feature type="region of interest" description="G4" evidence="4">
    <location>
        <begin position="181"/>
        <end position="184"/>
    </location>
</feature>
<feature type="region of interest" description="G5" evidence="4">
    <location>
        <begin position="219"/>
        <end position="221"/>
    </location>
</feature>
<feature type="binding site" evidence="1">
    <location>
        <position position="67"/>
    </location>
    <ligand>
        <name>GTP</name>
        <dbReference type="ChEBI" id="CHEBI:37565"/>
    </ligand>
</feature>
<feature type="binding site" evidence="1">
    <location>
        <position position="69"/>
    </location>
    <ligand>
        <name>GTP</name>
        <dbReference type="ChEBI" id="CHEBI:37565"/>
    </ligand>
</feature>
<feature type="binding site" evidence="1">
    <location>
        <position position="70"/>
    </location>
    <ligand>
        <name>GTP</name>
        <dbReference type="ChEBI" id="CHEBI:37565"/>
    </ligand>
</feature>
<feature type="binding site" evidence="1">
    <location>
        <position position="71"/>
    </location>
    <ligand>
        <name>GTP</name>
        <dbReference type="ChEBI" id="CHEBI:37565"/>
    </ligand>
</feature>
<feature type="binding site" evidence="1">
    <location>
        <position position="71"/>
    </location>
    <ligand>
        <name>Mg(2+)</name>
        <dbReference type="ChEBI" id="CHEBI:18420"/>
    </ligand>
</feature>
<feature type="binding site" evidence="1">
    <location>
        <position position="72"/>
    </location>
    <ligand>
        <name>GTP</name>
        <dbReference type="ChEBI" id="CHEBI:37565"/>
    </ligand>
</feature>
<feature type="binding site" evidence="1">
    <location>
        <position position="181"/>
    </location>
    <ligand>
        <name>GTP</name>
        <dbReference type="ChEBI" id="CHEBI:37565"/>
    </ligand>
</feature>
<feature type="binding site" evidence="1">
    <location>
        <position position="184"/>
    </location>
    <ligand>
        <name>GTP</name>
        <dbReference type="ChEBI" id="CHEBI:37565"/>
    </ligand>
</feature>
<feature type="binding site" evidence="1">
    <location>
        <position position="219"/>
    </location>
    <ligand>
        <name>GTP</name>
        <dbReference type="ChEBI" id="CHEBI:37565"/>
    </ligand>
</feature>
<feature type="binding site" evidence="1">
    <location>
        <position position="220"/>
    </location>
    <ligand>
        <name>GTP</name>
        <dbReference type="ChEBI" id="CHEBI:37565"/>
    </ligand>
</feature>
<feature type="binding site" evidence="1">
    <location>
        <position position="221"/>
    </location>
    <ligand>
        <name>GTP</name>
        <dbReference type="ChEBI" id="CHEBI:37565"/>
    </ligand>
</feature>
<feature type="modified residue" description="N6-acetyllysine" evidence="2">
    <location>
        <position position="79"/>
    </location>
</feature>
<feature type="modified residue" description="N6-acetyllysine; alternate" evidence="2">
    <location>
        <position position="88"/>
    </location>
</feature>
<feature type="modified residue" description="N6-succinyllysine; alternate" evidence="3">
    <location>
        <position position="88"/>
    </location>
</feature>
<feature type="modified residue" description="N6-succinyllysine" evidence="3">
    <location>
        <position position="234"/>
    </location>
</feature>
<feature type="modified residue" description="N6-acetyllysine" evidence="2">
    <location>
        <position position="256"/>
    </location>
</feature>
<feature type="modified residue" description="Phosphothreonine" evidence="2">
    <location>
        <position position="278"/>
    </location>
</feature>
<feature type="modified residue" description="N6-succinyllysine" evidence="3">
    <location>
        <position position="286"/>
    </location>
</feature>
<feature type="modified residue" description="Phosphoserine" evidence="3">
    <location>
        <position position="312"/>
    </location>
</feature>
<feature type="modified residue" description="N6-acetyllysine" evidence="3">
    <location>
        <position position="361"/>
    </location>
</feature>
<feature type="modified residue" description="N6-acetyllysine" evidence="2">
    <location>
        <position position="418"/>
    </location>
</feature>